<keyword id="KW-1070">Brassinosteroid signaling pathway</keyword>
<keyword id="KW-0238">DNA-binding</keyword>
<keyword id="KW-1184">Jasmonic acid signaling pathway</keyword>
<keyword id="KW-0539">Nucleus</keyword>
<keyword id="KW-0611">Plant defense</keyword>
<keyword id="KW-1185">Reference proteome</keyword>
<keyword id="KW-0804">Transcription</keyword>
<keyword id="KW-0805">Transcription regulation</keyword>
<organism>
    <name type="scientific">Arabidopsis thaliana</name>
    <name type="common">Mouse-ear cress</name>
    <dbReference type="NCBI Taxonomy" id="3702"/>
    <lineage>
        <taxon>Eukaryota</taxon>
        <taxon>Viridiplantae</taxon>
        <taxon>Streptophyta</taxon>
        <taxon>Embryophyta</taxon>
        <taxon>Tracheophyta</taxon>
        <taxon>Spermatophyta</taxon>
        <taxon>Magnoliopsida</taxon>
        <taxon>eudicotyledons</taxon>
        <taxon>Gunneridae</taxon>
        <taxon>Pentapetalae</taxon>
        <taxon>rosids</taxon>
        <taxon>malvids</taxon>
        <taxon>Brassicales</taxon>
        <taxon>Brassicaceae</taxon>
        <taxon>Camelineae</taxon>
        <taxon>Arabidopsis</taxon>
    </lineage>
</organism>
<accession>Q9SKD9</accession>
<evidence type="ECO:0000250" key="1"/>
<evidence type="ECO:0000255" key="2">
    <source>
        <dbReference type="PROSITE-ProRule" id="PRU00223"/>
    </source>
</evidence>
<evidence type="ECO:0000269" key="3">
    <source>
    </source>
</evidence>
<evidence type="ECO:0000269" key="4">
    <source>
    </source>
</evidence>
<evidence type="ECO:0000269" key="5">
    <source>
    </source>
</evidence>
<evidence type="ECO:0000269" key="6">
    <source>
    </source>
</evidence>
<evidence type="ECO:0000269" key="7">
    <source>
    </source>
</evidence>
<evidence type="ECO:0000305" key="8"/>
<dbReference type="EMBL" id="AY046275">
    <property type="protein sequence ID" value="AAK96020.1"/>
    <property type="molecule type" value="mRNA"/>
</dbReference>
<dbReference type="EMBL" id="AC006526">
    <property type="protein sequence ID" value="AAD23042.1"/>
    <property type="molecule type" value="Genomic_DNA"/>
</dbReference>
<dbReference type="EMBL" id="CP002685">
    <property type="protein sequence ID" value="AEC10690.1"/>
    <property type="molecule type" value="Genomic_DNA"/>
</dbReference>
<dbReference type="EMBL" id="AY080812">
    <property type="protein sequence ID" value="AAL87292.1"/>
    <property type="molecule type" value="mRNA"/>
</dbReference>
<dbReference type="EMBL" id="AY117210">
    <property type="protein sequence ID" value="AAM51285.1"/>
    <property type="molecule type" value="mRNA"/>
</dbReference>
<dbReference type="PIR" id="D84902">
    <property type="entry name" value="D84902"/>
</dbReference>
<dbReference type="RefSeq" id="NP_182163.1">
    <property type="nucleotide sequence ID" value="NM_130204.3"/>
</dbReference>
<dbReference type="SMR" id="Q9SKD9"/>
<dbReference type="BioGRID" id="4583">
    <property type="interactions" value="6"/>
</dbReference>
<dbReference type="FunCoup" id="Q9SKD9">
    <property type="interactions" value="1"/>
</dbReference>
<dbReference type="IntAct" id="Q9SKD9">
    <property type="interactions" value="4"/>
</dbReference>
<dbReference type="STRING" id="3702.Q9SKD9"/>
<dbReference type="iPTMnet" id="Q9SKD9"/>
<dbReference type="PaxDb" id="3702-AT2G46400.1"/>
<dbReference type="ProteomicsDB" id="234289"/>
<dbReference type="DNASU" id="819248"/>
<dbReference type="EnsemblPlants" id="AT2G46400.1">
    <property type="protein sequence ID" value="AT2G46400.1"/>
    <property type="gene ID" value="AT2G46400"/>
</dbReference>
<dbReference type="GeneID" id="819248"/>
<dbReference type="Gramene" id="AT2G46400.1">
    <property type="protein sequence ID" value="AT2G46400.1"/>
    <property type="gene ID" value="AT2G46400"/>
</dbReference>
<dbReference type="KEGG" id="ath:AT2G46400"/>
<dbReference type="Araport" id="AT2G46400"/>
<dbReference type="TAIR" id="AT2G46400">
    <property type="gene designation" value="WRKY46"/>
</dbReference>
<dbReference type="eggNOG" id="ENOG502R7UM">
    <property type="taxonomic scope" value="Eukaryota"/>
</dbReference>
<dbReference type="HOGENOM" id="CLU_058534_0_0_1"/>
<dbReference type="InParanoid" id="Q9SKD9"/>
<dbReference type="OMA" id="IDFGQDW"/>
<dbReference type="OrthoDB" id="1888929at2759"/>
<dbReference type="PhylomeDB" id="Q9SKD9"/>
<dbReference type="PRO" id="PR:Q9SKD9"/>
<dbReference type="Proteomes" id="UP000006548">
    <property type="component" value="Chromosome 2"/>
</dbReference>
<dbReference type="ExpressionAtlas" id="Q9SKD9">
    <property type="expression patterns" value="baseline and differential"/>
</dbReference>
<dbReference type="GO" id="GO:0005730">
    <property type="term" value="C:nucleolus"/>
    <property type="evidence" value="ECO:0007005"/>
    <property type="project" value="TAIR"/>
</dbReference>
<dbReference type="GO" id="GO:0000987">
    <property type="term" value="F:cis-regulatory region sequence-specific DNA binding"/>
    <property type="evidence" value="ECO:0000353"/>
    <property type="project" value="TAIR"/>
</dbReference>
<dbReference type="GO" id="GO:0003700">
    <property type="term" value="F:DNA-binding transcription factor activity"/>
    <property type="evidence" value="ECO:0000250"/>
    <property type="project" value="TAIR"/>
</dbReference>
<dbReference type="GO" id="GO:0043565">
    <property type="term" value="F:sequence-specific DNA binding"/>
    <property type="evidence" value="ECO:0000314"/>
    <property type="project" value="TAIR"/>
</dbReference>
<dbReference type="GO" id="GO:0000976">
    <property type="term" value="F:transcription cis-regulatory region binding"/>
    <property type="evidence" value="ECO:0000353"/>
    <property type="project" value="TAIR"/>
</dbReference>
<dbReference type="GO" id="GO:0009742">
    <property type="term" value="P:brassinosteroid mediated signaling pathway"/>
    <property type="evidence" value="ECO:0007669"/>
    <property type="project" value="UniProtKB-KW"/>
</dbReference>
<dbReference type="GO" id="GO:0071456">
    <property type="term" value="P:cellular response to hypoxia"/>
    <property type="evidence" value="ECO:0007007"/>
    <property type="project" value="TAIR"/>
</dbReference>
<dbReference type="GO" id="GO:0042742">
    <property type="term" value="P:defense response to bacterium"/>
    <property type="evidence" value="ECO:0000315"/>
    <property type="project" value="UniProtKB"/>
</dbReference>
<dbReference type="GO" id="GO:0048527">
    <property type="term" value="P:lateral root development"/>
    <property type="evidence" value="ECO:0000315"/>
    <property type="project" value="TAIR"/>
</dbReference>
<dbReference type="GO" id="GO:1900457">
    <property type="term" value="P:regulation of brassinosteroid mediated signaling pathway"/>
    <property type="evidence" value="ECO:0000315"/>
    <property type="project" value="UniProtKB"/>
</dbReference>
<dbReference type="GO" id="GO:0006355">
    <property type="term" value="P:regulation of DNA-templated transcription"/>
    <property type="evidence" value="ECO:0000315"/>
    <property type="project" value="TAIR"/>
</dbReference>
<dbReference type="GO" id="GO:2000022">
    <property type="term" value="P:regulation of jasmonic acid mediated signaling pathway"/>
    <property type="evidence" value="ECO:0000315"/>
    <property type="project" value="UniProtKB"/>
</dbReference>
<dbReference type="GO" id="GO:2000070">
    <property type="term" value="P:regulation of response to water deprivation"/>
    <property type="evidence" value="ECO:0000315"/>
    <property type="project" value="UniProtKB"/>
</dbReference>
<dbReference type="GO" id="GO:0009617">
    <property type="term" value="P:response to bacterium"/>
    <property type="evidence" value="ECO:0000270"/>
    <property type="project" value="UniProtKB"/>
</dbReference>
<dbReference type="GO" id="GO:0009751">
    <property type="term" value="P:response to salicylic acid"/>
    <property type="evidence" value="ECO:0000270"/>
    <property type="project" value="UniProtKB"/>
</dbReference>
<dbReference type="Gene3D" id="2.20.25.80">
    <property type="entry name" value="WRKY domain"/>
    <property type="match status" value="1"/>
</dbReference>
<dbReference type="InterPro" id="IPR003657">
    <property type="entry name" value="WRKY_dom"/>
</dbReference>
<dbReference type="InterPro" id="IPR036576">
    <property type="entry name" value="WRKY_dom_sf"/>
</dbReference>
<dbReference type="InterPro" id="IPR044810">
    <property type="entry name" value="WRKY_plant"/>
</dbReference>
<dbReference type="PANTHER" id="PTHR32096:SF146">
    <property type="entry name" value="WRKY TRANSCRIPTION FACTOR 19-RELATED"/>
    <property type="match status" value="1"/>
</dbReference>
<dbReference type="PANTHER" id="PTHR32096">
    <property type="entry name" value="WRKY TRANSCRIPTION FACTOR 30-RELATED-RELATED"/>
    <property type="match status" value="1"/>
</dbReference>
<dbReference type="Pfam" id="PF03106">
    <property type="entry name" value="WRKY"/>
    <property type="match status" value="1"/>
</dbReference>
<dbReference type="SMART" id="SM00774">
    <property type="entry name" value="WRKY"/>
    <property type="match status" value="1"/>
</dbReference>
<dbReference type="SUPFAM" id="SSF118290">
    <property type="entry name" value="WRKY DNA-binding domain"/>
    <property type="match status" value="1"/>
</dbReference>
<dbReference type="PROSITE" id="PS50811">
    <property type="entry name" value="WRKY"/>
    <property type="match status" value="1"/>
</dbReference>
<name>WRK46_ARATH</name>
<reference key="1">
    <citation type="submission" date="2001-07" db="EMBL/GenBank/DDBJ databases">
        <authorList>
            <person name="Ulker B."/>
            <person name="Somssich I.E."/>
        </authorList>
    </citation>
    <scope>NUCLEOTIDE SEQUENCE [MRNA]</scope>
    <source>
        <strain>cv. Columbia</strain>
        <tissue>Flower</tissue>
    </source>
</reference>
<reference key="2">
    <citation type="journal article" date="1999" name="Nature">
        <title>Sequence and analysis of chromosome 2 of the plant Arabidopsis thaliana.</title>
        <authorList>
            <person name="Lin X."/>
            <person name="Kaul S."/>
            <person name="Rounsley S.D."/>
            <person name="Shea T.P."/>
            <person name="Benito M.-I."/>
            <person name="Town C.D."/>
            <person name="Fujii C.Y."/>
            <person name="Mason T.M."/>
            <person name="Bowman C.L."/>
            <person name="Barnstead M.E."/>
            <person name="Feldblyum T.V."/>
            <person name="Buell C.R."/>
            <person name="Ketchum K.A."/>
            <person name="Lee J.J."/>
            <person name="Ronning C.M."/>
            <person name="Koo H.L."/>
            <person name="Moffat K.S."/>
            <person name="Cronin L.A."/>
            <person name="Shen M."/>
            <person name="Pai G."/>
            <person name="Van Aken S."/>
            <person name="Umayam L."/>
            <person name="Tallon L.J."/>
            <person name="Gill J.E."/>
            <person name="Adams M.D."/>
            <person name="Carrera A.J."/>
            <person name="Creasy T.H."/>
            <person name="Goodman H.M."/>
            <person name="Somerville C.R."/>
            <person name="Copenhaver G.P."/>
            <person name="Preuss D."/>
            <person name="Nierman W.C."/>
            <person name="White O."/>
            <person name="Eisen J.A."/>
            <person name="Salzberg S.L."/>
            <person name="Fraser C.M."/>
            <person name="Venter J.C."/>
        </authorList>
    </citation>
    <scope>NUCLEOTIDE SEQUENCE [LARGE SCALE GENOMIC DNA]</scope>
    <source>
        <strain>cv. Columbia</strain>
    </source>
</reference>
<reference key="3">
    <citation type="journal article" date="2017" name="Plant J.">
        <title>Araport11: a complete reannotation of the Arabidopsis thaliana reference genome.</title>
        <authorList>
            <person name="Cheng C.Y."/>
            <person name="Krishnakumar V."/>
            <person name="Chan A.P."/>
            <person name="Thibaud-Nissen F."/>
            <person name="Schobel S."/>
            <person name="Town C.D."/>
        </authorList>
    </citation>
    <scope>GENOME REANNOTATION</scope>
    <source>
        <strain>cv. Columbia</strain>
    </source>
</reference>
<reference key="4">
    <citation type="journal article" date="2003" name="Science">
        <title>Empirical analysis of transcriptional activity in the Arabidopsis genome.</title>
        <authorList>
            <person name="Yamada K."/>
            <person name="Lim J."/>
            <person name="Dale J.M."/>
            <person name="Chen H."/>
            <person name="Shinn P."/>
            <person name="Palm C.J."/>
            <person name="Southwick A.M."/>
            <person name="Wu H.C."/>
            <person name="Kim C.J."/>
            <person name="Nguyen M."/>
            <person name="Pham P.K."/>
            <person name="Cheuk R.F."/>
            <person name="Karlin-Newmann G."/>
            <person name="Liu S.X."/>
            <person name="Lam B."/>
            <person name="Sakano H."/>
            <person name="Wu T."/>
            <person name="Yu G."/>
            <person name="Miranda M."/>
            <person name="Quach H.L."/>
            <person name="Tripp M."/>
            <person name="Chang C.H."/>
            <person name="Lee J.M."/>
            <person name="Toriumi M.J."/>
            <person name="Chan M.M."/>
            <person name="Tang C.C."/>
            <person name="Onodera C.S."/>
            <person name="Deng J.M."/>
            <person name="Akiyama K."/>
            <person name="Ansari Y."/>
            <person name="Arakawa T."/>
            <person name="Banh J."/>
            <person name="Banno F."/>
            <person name="Bowser L."/>
            <person name="Brooks S.Y."/>
            <person name="Carninci P."/>
            <person name="Chao Q."/>
            <person name="Choy N."/>
            <person name="Enju A."/>
            <person name="Goldsmith A.D."/>
            <person name="Gurjal M."/>
            <person name="Hansen N.F."/>
            <person name="Hayashizaki Y."/>
            <person name="Johnson-Hopson C."/>
            <person name="Hsuan V.W."/>
            <person name="Iida K."/>
            <person name="Karnes M."/>
            <person name="Khan S."/>
            <person name="Koesema E."/>
            <person name="Ishida J."/>
            <person name="Jiang P.X."/>
            <person name="Jones T."/>
            <person name="Kawai J."/>
            <person name="Kamiya A."/>
            <person name="Meyers C."/>
            <person name="Nakajima M."/>
            <person name="Narusaka M."/>
            <person name="Seki M."/>
            <person name="Sakurai T."/>
            <person name="Satou M."/>
            <person name="Tamse R."/>
            <person name="Vaysberg M."/>
            <person name="Wallender E.K."/>
            <person name="Wong C."/>
            <person name="Yamamura Y."/>
            <person name="Yuan S."/>
            <person name="Shinozaki K."/>
            <person name="Davis R.W."/>
            <person name="Theologis A."/>
            <person name="Ecker J.R."/>
        </authorList>
    </citation>
    <scope>NUCLEOTIDE SEQUENCE [LARGE SCALE MRNA]</scope>
    <source>
        <strain>cv. Columbia</strain>
    </source>
</reference>
<reference key="5">
    <citation type="journal article" date="2012" name="J. Exp. Bot.">
        <title>WRKY54 and WRKY70 co-operate as negative regulators of leaf senescence in Arabidopsis thaliana.</title>
        <authorList>
            <person name="Besseau S."/>
            <person name="Li J."/>
            <person name="Palva E.T."/>
        </authorList>
    </citation>
    <scope>INDUCTION BY SALICYLIC ACID</scope>
    <source>
        <strain>cv. Columbia</strain>
    </source>
</reference>
<reference key="6">
    <citation type="journal article" date="2012" name="Mol. Plant Microbe Interact.">
        <title>EDS1 contributes to nonhost resistance of Arabidopsis thaliana against Erwinia amylovora.</title>
        <authorList>
            <person name="Moreau M."/>
            <person name="Degrave A."/>
            <person name="Vedel R."/>
            <person name="Bitton F."/>
            <person name="Patrit O."/>
            <person name="Renou J.-P."/>
            <person name="Barny M.-A."/>
            <person name="Fagard M."/>
        </authorList>
    </citation>
    <scope>FUNCTION</scope>
    <scope>DISRUPTION PHENOTYPE</scope>
    <scope>INDUCTION BY ERWINIA AMYLOVORA</scope>
    <source>
        <strain>cv. Columbia</strain>
    </source>
</reference>
<reference key="7">
    <citation type="journal article" date="2012" name="Plant Sci.">
        <title>Arabidopsis WRKY46 coordinates with WRKY70 and WRKY53 in basal resistance against pathogen Pseudomonas syringae.</title>
        <authorList>
            <person name="Hu Y."/>
            <person name="Dong Q."/>
            <person name="Yu D."/>
        </authorList>
    </citation>
    <scope>FUNCTION</scope>
    <scope>DISRUPTION PHENOTYPE</scope>
    <scope>INDUCTION BY SALICYLIC ACID AND PSEUDOMONAS SYRINGAE</scope>
    <scope>TISSUE SPECIFICITY</scope>
    <source>
        <strain>cv. Columbia</strain>
    </source>
</reference>
<reference key="8">
    <citation type="journal article" date="2014" name="Plant J.">
        <title>Transcription factor WRKY46 regulates osmotic stress responses and stomatal movement independently in Arabidopsis.</title>
        <authorList>
            <person name="Ding Z.J."/>
            <person name="Yan J.Y."/>
            <person name="Xu X.Y."/>
            <person name="Yu D.Q."/>
            <person name="Li G.X."/>
            <person name="Zhang S.Q."/>
            <person name="Zheng S.J."/>
        </authorList>
    </citation>
    <scope>FUNCTION</scope>
    <scope>INDUCTION</scope>
    <scope>DISRUPTION PHENOTYPE</scope>
    <scope>TISSUE SPECIFICITY</scope>
</reference>
<reference key="9">
    <citation type="journal article" date="2017" name="Plant Cell">
        <title>Arabidopsis WRKY46, WRKY54, and WRKY70 transcription factors are involved in brassinosteroid-regulated plant growth and drought responses.</title>
        <authorList>
            <person name="Chen J."/>
            <person name="Nolan T.M."/>
            <person name="Ye H."/>
            <person name="Zhang M."/>
            <person name="Tong H."/>
            <person name="Xin P."/>
            <person name="Chu J."/>
            <person name="Chu C."/>
            <person name="Li Z."/>
            <person name="Yin Y."/>
        </authorList>
    </citation>
    <scope>FUNCTION</scope>
    <scope>DISRUPTION PHENOTYPE</scope>
    <scope>INTERACTION WITH BZR2/BES1</scope>
    <scope>PHOSPHORYLATION BY ASK7/BIN2</scope>
    <source>
        <strain>cv. Columbia</strain>
    </source>
</reference>
<sequence>MMMEEKLVINELELGKELANRLMNNLKHTSSVDSNKTLISDILRIYQNAIFMLSFNQDKNILKRSLEIDGKDSKNVFKKRKVSEKNTEKVKVFVATEQENGSIDDGHCWRKYGQKEIHGSKNPRAYYRCTHRFTQDCLAVKQVQKSDTDPSLFEVKYLGNHTCNNITSPKTTTNFSVSLTNTNIFEGNRVHVTEQSEDMKPTKSEEVMISLEDLENKKNIFRTFSFSNHEIENGVWKSNLFLGNFVEDLSPATSGSAITSEVLSAPAAVENSETADSYFSSLDNIIDFGQDWLWS</sequence>
<protein>
    <recommendedName>
        <fullName>Probable WRKY transcription factor 46</fullName>
    </recommendedName>
    <alternativeName>
        <fullName>WRKY DNA-binding protein 46</fullName>
    </alternativeName>
</protein>
<comment type="function">
    <text evidence="1 4 5 6 7">Transcription factor involved in the regulation of osmotic stress responses and stomatal movement (PubMed:24773321). Interacts specifically with the W box (5'-(T)TGAC[CT]-3'), a frequently occurring elicitor-responsive cis-acting element (By similarity). Positive regulator of EDS1-dependent defense against E.amylovora (PubMed:22316300). Together with WRKY70 and WRKY53, promotes resistance to P.syringae, probably by enhancing salicylic acid (SA)- dependent genes. Contributes to the suppression of jasmonic acid (MeJA)-induced expression of PDF1.2 (PubMed:22325892). Together with WRKY54 and WRKY70, promotes brassinosteroid (BR)-regulated plant growth but prevent drought response by modulating gene expression (PubMed:28576847).</text>
</comment>
<comment type="subunit">
    <text evidence="7">Binds to BZR2/BES1 to cooperatively regulate the expression of target genes.</text>
</comment>
<comment type="subcellular location">
    <subcellularLocation>
        <location evidence="2">Nucleus</location>
    </subcellularLocation>
</comment>
<comment type="tissue specificity">
    <text evidence="5 6">Expressed in guard cells, hypocotyls, and in the vascular tissues of cotyledon and root (PubMed:24773321). Mostly expressed in roots, at lower levels in leaves and petioles, and, to a lower extent, in stems, flowers and siliques (PubMed:22325892).</text>
</comment>
<comment type="induction">
    <text evidence="3 4 5 6">Up-regulated by drought, salt and hydrogen peroxide treatments (PubMed:24773321). Induced by salicylic acid (SA) (PubMed:22268143, PubMed:22325892). Up-regulated by E.amylovora (PubMed:22316300). Triggered by P.syringae (PubMed:22325892).</text>
</comment>
<comment type="PTM">
    <text evidence="7">Phosphorylated and destabilized by ASK7/BIN2.</text>
</comment>
<comment type="disruption phenotype">
    <text evidence="4 5 6 7">Decreased tolerance to dehydration and salt stress (PubMed:24773321). Increase in the number of necrotic leaves and in the intensity of necrosis in response to E.amylovora (PubMed:22316300). Increased susceptibility to P.syringae associated with reduced PR1 induction in double mutants wrky46 wrky70 and wrky46 wrky53, and triple mutant wrky46 wrky70 wrky53. In these mutants, higher induction of PDF1.2 upon jasmonic acid (MeJA) treatment (PubMed:22325892). The triple mutant wrky46 wrky54 wrky70 has defects in brassinosteroid (BR)-regulated growth and is more tolerant to drought stress (PubMed:28576847).</text>
</comment>
<comment type="similarity">
    <text evidence="8">Belongs to the WRKY group III family.</text>
</comment>
<proteinExistence type="evidence at protein level"/>
<gene>
    <name type="primary">WRKY46</name>
    <name type="ordered locus">At2g46400</name>
    <name type="ORF">F11C10.9</name>
</gene>
<feature type="chain" id="PRO_0000133687" description="Probable WRKY transcription factor 46">
    <location>
        <begin position="1"/>
        <end position="295"/>
    </location>
</feature>
<feature type="DNA-binding region" description="WRKY" evidence="2">
    <location>
        <begin position="98"/>
        <end position="166"/>
    </location>
</feature>